<feature type="chain" id="PRO_0000177812" description="D-alanine--D-alanine ligase">
    <location>
        <begin position="1"/>
        <end position="360"/>
    </location>
</feature>
<feature type="domain" description="ATP-grasp" evidence="2">
    <location>
        <begin position="149"/>
        <end position="353"/>
    </location>
</feature>
<feature type="binding site" evidence="2">
    <location>
        <begin position="176"/>
        <end position="231"/>
    </location>
    <ligand>
        <name>ATP</name>
        <dbReference type="ChEBI" id="CHEBI:30616"/>
    </ligand>
</feature>
<feature type="binding site" evidence="2">
    <location>
        <position position="308"/>
    </location>
    <ligand>
        <name>Mg(2+)</name>
        <dbReference type="ChEBI" id="CHEBI:18420"/>
        <label>1</label>
    </ligand>
</feature>
<feature type="binding site" evidence="2">
    <location>
        <position position="320"/>
    </location>
    <ligand>
        <name>Mg(2+)</name>
        <dbReference type="ChEBI" id="CHEBI:18420"/>
        <label>1</label>
    </ligand>
</feature>
<feature type="binding site" evidence="2">
    <location>
        <position position="320"/>
    </location>
    <ligand>
        <name>Mg(2+)</name>
        <dbReference type="ChEBI" id="CHEBI:18420"/>
        <label>2</label>
    </ligand>
</feature>
<feature type="binding site" evidence="2">
    <location>
        <position position="322"/>
    </location>
    <ligand>
        <name>Mg(2+)</name>
        <dbReference type="ChEBI" id="CHEBI:18420"/>
        <label>2</label>
    </ligand>
</feature>
<protein>
    <recommendedName>
        <fullName evidence="2">D-alanine--D-alanine ligase</fullName>
        <ecNumber evidence="2">6.3.2.4</ecNumber>
    </recommendedName>
    <alternativeName>
        <fullName evidence="2">D-Ala-D-Ala ligase</fullName>
    </alternativeName>
    <alternativeName>
        <fullName evidence="2">D-alanylalanine synthetase</fullName>
    </alternativeName>
</protein>
<organism>
    <name type="scientific">Corynebacterium glutamicum (strain ATCC 13032 / DSM 20300 / JCM 1318 / BCRC 11384 / CCUG 27702 / LMG 3730 / NBRC 12168 / NCIMB 10025 / NRRL B-2784 / 534)</name>
    <dbReference type="NCBI Taxonomy" id="196627"/>
    <lineage>
        <taxon>Bacteria</taxon>
        <taxon>Bacillati</taxon>
        <taxon>Actinomycetota</taxon>
        <taxon>Actinomycetes</taxon>
        <taxon>Mycobacteriales</taxon>
        <taxon>Corynebacteriaceae</taxon>
        <taxon>Corynebacterium</taxon>
    </lineage>
</organism>
<proteinExistence type="inferred from homology"/>
<dbReference type="EC" id="6.3.2.4" evidence="2"/>
<dbReference type="EMBL" id="BA000036">
    <property type="protein sequence ID" value="BAB98714.1"/>
    <property type="molecule type" value="Genomic_DNA"/>
</dbReference>
<dbReference type="EMBL" id="BX927151">
    <property type="protein sequence ID" value="CAF20019.1"/>
    <property type="molecule type" value="Genomic_DNA"/>
</dbReference>
<dbReference type="RefSeq" id="NP_600541.1">
    <property type="nucleotide sequence ID" value="NC_003450.3"/>
</dbReference>
<dbReference type="RefSeq" id="WP_011014285.1">
    <property type="nucleotide sequence ID" value="NC_006958.1"/>
</dbReference>
<dbReference type="SMR" id="Q8NQV2"/>
<dbReference type="STRING" id="196627.cg1493"/>
<dbReference type="KEGG" id="cgb:cg1493"/>
<dbReference type="KEGG" id="cgl:Cgl1321"/>
<dbReference type="PATRIC" id="fig|196627.13.peg.1291"/>
<dbReference type="eggNOG" id="COG1181">
    <property type="taxonomic scope" value="Bacteria"/>
</dbReference>
<dbReference type="HOGENOM" id="CLU_039268_0_1_11"/>
<dbReference type="OrthoDB" id="9813261at2"/>
<dbReference type="BioCyc" id="CORYNE:G18NG-10899-MONOMER"/>
<dbReference type="UniPathway" id="UPA00219"/>
<dbReference type="Proteomes" id="UP000000582">
    <property type="component" value="Chromosome"/>
</dbReference>
<dbReference type="Proteomes" id="UP000001009">
    <property type="component" value="Chromosome"/>
</dbReference>
<dbReference type="GO" id="GO:0005829">
    <property type="term" value="C:cytosol"/>
    <property type="evidence" value="ECO:0007669"/>
    <property type="project" value="TreeGrafter"/>
</dbReference>
<dbReference type="GO" id="GO:0005524">
    <property type="term" value="F:ATP binding"/>
    <property type="evidence" value="ECO:0007669"/>
    <property type="project" value="UniProtKB-KW"/>
</dbReference>
<dbReference type="GO" id="GO:0008716">
    <property type="term" value="F:D-alanine-D-alanine ligase activity"/>
    <property type="evidence" value="ECO:0007669"/>
    <property type="project" value="UniProtKB-UniRule"/>
</dbReference>
<dbReference type="GO" id="GO:0046872">
    <property type="term" value="F:metal ion binding"/>
    <property type="evidence" value="ECO:0007669"/>
    <property type="project" value="UniProtKB-KW"/>
</dbReference>
<dbReference type="GO" id="GO:0071555">
    <property type="term" value="P:cell wall organization"/>
    <property type="evidence" value="ECO:0007669"/>
    <property type="project" value="UniProtKB-KW"/>
</dbReference>
<dbReference type="GO" id="GO:0009252">
    <property type="term" value="P:peptidoglycan biosynthetic process"/>
    <property type="evidence" value="ECO:0007669"/>
    <property type="project" value="UniProtKB-UniRule"/>
</dbReference>
<dbReference type="GO" id="GO:0008360">
    <property type="term" value="P:regulation of cell shape"/>
    <property type="evidence" value="ECO:0007669"/>
    <property type="project" value="UniProtKB-KW"/>
</dbReference>
<dbReference type="FunFam" id="3.30.470.20:FF:000008">
    <property type="entry name" value="D-alanine--D-alanine ligase"/>
    <property type="match status" value="1"/>
</dbReference>
<dbReference type="Gene3D" id="3.40.50.20">
    <property type="match status" value="1"/>
</dbReference>
<dbReference type="Gene3D" id="3.30.1490.20">
    <property type="entry name" value="ATP-grasp fold, A domain"/>
    <property type="match status" value="1"/>
</dbReference>
<dbReference type="Gene3D" id="3.30.470.20">
    <property type="entry name" value="ATP-grasp fold, B domain"/>
    <property type="match status" value="1"/>
</dbReference>
<dbReference type="HAMAP" id="MF_00047">
    <property type="entry name" value="Dala_Dala_lig"/>
    <property type="match status" value="1"/>
</dbReference>
<dbReference type="InterPro" id="IPR011761">
    <property type="entry name" value="ATP-grasp"/>
</dbReference>
<dbReference type="InterPro" id="IPR013815">
    <property type="entry name" value="ATP_grasp_subdomain_1"/>
</dbReference>
<dbReference type="InterPro" id="IPR000291">
    <property type="entry name" value="D-Ala_lig_Van_CS"/>
</dbReference>
<dbReference type="InterPro" id="IPR005905">
    <property type="entry name" value="D_ala_D_ala"/>
</dbReference>
<dbReference type="InterPro" id="IPR011095">
    <property type="entry name" value="Dala_Dala_lig_C"/>
</dbReference>
<dbReference type="InterPro" id="IPR011127">
    <property type="entry name" value="Dala_Dala_lig_N"/>
</dbReference>
<dbReference type="InterPro" id="IPR016185">
    <property type="entry name" value="PreATP-grasp_dom_sf"/>
</dbReference>
<dbReference type="NCBIfam" id="TIGR01205">
    <property type="entry name" value="D_ala_D_alaTIGR"/>
    <property type="match status" value="1"/>
</dbReference>
<dbReference type="NCBIfam" id="NF002528">
    <property type="entry name" value="PRK01966.1-4"/>
    <property type="match status" value="1"/>
</dbReference>
<dbReference type="PANTHER" id="PTHR23132">
    <property type="entry name" value="D-ALANINE--D-ALANINE LIGASE"/>
    <property type="match status" value="1"/>
</dbReference>
<dbReference type="PANTHER" id="PTHR23132:SF25">
    <property type="entry name" value="D-ALANINE--D-ALANINE LIGASE A"/>
    <property type="match status" value="1"/>
</dbReference>
<dbReference type="Pfam" id="PF07478">
    <property type="entry name" value="Dala_Dala_lig_C"/>
    <property type="match status" value="1"/>
</dbReference>
<dbReference type="Pfam" id="PF01820">
    <property type="entry name" value="Dala_Dala_lig_N"/>
    <property type="match status" value="1"/>
</dbReference>
<dbReference type="PIRSF" id="PIRSF039102">
    <property type="entry name" value="Ddl/VanB"/>
    <property type="match status" value="1"/>
</dbReference>
<dbReference type="SUPFAM" id="SSF56059">
    <property type="entry name" value="Glutathione synthetase ATP-binding domain-like"/>
    <property type="match status" value="1"/>
</dbReference>
<dbReference type="SUPFAM" id="SSF52440">
    <property type="entry name" value="PreATP-grasp domain"/>
    <property type="match status" value="1"/>
</dbReference>
<dbReference type="PROSITE" id="PS50975">
    <property type="entry name" value="ATP_GRASP"/>
    <property type="match status" value="1"/>
</dbReference>
<dbReference type="PROSITE" id="PS00843">
    <property type="entry name" value="DALA_DALA_LIGASE_1"/>
    <property type="match status" value="1"/>
</dbReference>
<dbReference type="PROSITE" id="PS00844">
    <property type="entry name" value="DALA_DALA_LIGASE_2"/>
    <property type="match status" value="1"/>
</dbReference>
<keyword id="KW-0067">ATP-binding</keyword>
<keyword id="KW-0133">Cell shape</keyword>
<keyword id="KW-0961">Cell wall biogenesis/degradation</keyword>
<keyword id="KW-0963">Cytoplasm</keyword>
<keyword id="KW-0436">Ligase</keyword>
<keyword id="KW-0460">Magnesium</keyword>
<keyword id="KW-0464">Manganese</keyword>
<keyword id="KW-0479">Metal-binding</keyword>
<keyword id="KW-0547">Nucleotide-binding</keyword>
<keyword id="KW-0573">Peptidoglycan synthesis</keyword>
<keyword id="KW-1185">Reference proteome</keyword>
<gene>
    <name evidence="2" type="primary">ddl</name>
    <name type="synonym">ddlA</name>
    <name type="ordered locus">Cgl1321</name>
    <name type="ordered locus">cg1493</name>
</gene>
<evidence type="ECO:0000250" key="1"/>
<evidence type="ECO:0000255" key="2">
    <source>
        <dbReference type="HAMAP-Rule" id="MF_00047"/>
    </source>
</evidence>
<reference key="1">
    <citation type="journal article" date="2003" name="Appl. Microbiol. Biotechnol.">
        <title>The Corynebacterium glutamicum genome: features and impacts on biotechnological processes.</title>
        <authorList>
            <person name="Ikeda M."/>
            <person name="Nakagawa S."/>
        </authorList>
    </citation>
    <scope>NUCLEOTIDE SEQUENCE [LARGE SCALE GENOMIC DNA]</scope>
    <source>
        <strain>ATCC 13032 / DSM 20300 / JCM 1318 / BCRC 11384 / CCUG 27702 / LMG 3730 / NBRC 12168 / NCIMB 10025 / NRRL B-2784 / 534</strain>
    </source>
</reference>
<reference key="2">
    <citation type="journal article" date="2003" name="J. Biotechnol.">
        <title>The complete Corynebacterium glutamicum ATCC 13032 genome sequence and its impact on the production of L-aspartate-derived amino acids and vitamins.</title>
        <authorList>
            <person name="Kalinowski J."/>
            <person name="Bathe B."/>
            <person name="Bartels D."/>
            <person name="Bischoff N."/>
            <person name="Bott M."/>
            <person name="Burkovski A."/>
            <person name="Dusch N."/>
            <person name="Eggeling L."/>
            <person name="Eikmanns B.J."/>
            <person name="Gaigalat L."/>
            <person name="Goesmann A."/>
            <person name="Hartmann M."/>
            <person name="Huthmacher K."/>
            <person name="Kraemer R."/>
            <person name="Linke B."/>
            <person name="McHardy A.C."/>
            <person name="Meyer F."/>
            <person name="Moeckel B."/>
            <person name="Pfefferle W."/>
            <person name="Puehler A."/>
            <person name="Rey D.A."/>
            <person name="Rueckert C."/>
            <person name="Rupp O."/>
            <person name="Sahm H."/>
            <person name="Wendisch V.F."/>
            <person name="Wiegraebe I."/>
            <person name="Tauch A."/>
        </authorList>
    </citation>
    <scope>NUCLEOTIDE SEQUENCE [LARGE SCALE GENOMIC DNA]</scope>
    <source>
        <strain>ATCC 13032 / DSM 20300 / JCM 1318 / BCRC 11384 / CCUG 27702 / LMG 3730 / NBRC 12168 / NCIMB 10025 / NRRL B-2784 / 534</strain>
    </source>
</reference>
<comment type="function">
    <text evidence="2">Cell wall formation.</text>
</comment>
<comment type="catalytic activity">
    <reaction evidence="2">
        <text>2 D-alanine + ATP = D-alanyl-D-alanine + ADP + phosphate + H(+)</text>
        <dbReference type="Rhea" id="RHEA:11224"/>
        <dbReference type="ChEBI" id="CHEBI:15378"/>
        <dbReference type="ChEBI" id="CHEBI:30616"/>
        <dbReference type="ChEBI" id="CHEBI:43474"/>
        <dbReference type="ChEBI" id="CHEBI:57416"/>
        <dbReference type="ChEBI" id="CHEBI:57822"/>
        <dbReference type="ChEBI" id="CHEBI:456216"/>
        <dbReference type="EC" id="6.3.2.4"/>
    </reaction>
</comment>
<comment type="cofactor">
    <cofactor evidence="1">
        <name>Mg(2+)</name>
        <dbReference type="ChEBI" id="CHEBI:18420"/>
    </cofactor>
    <cofactor evidence="1">
        <name>Mn(2+)</name>
        <dbReference type="ChEBI" id="CHEBI:29035"/>
    </cofactor>
    <text evidence="1">Binds 2 magnesium or manganese ions per subunit.</text>
</comment>
<comment type="pathway">
    <text evidence="2">Cell wall biogenesis; peptidoglycan biosynthesis.</text>
</comment>
<comment type="subcellular location">
    <subcellularLocation>
        <location evidence="2">Cytoplasm</location>
    </subcellularLocation>
</comment>
<comment type="similarity">
    <text evidence="2">Belongs to the D-alanine--D-alanine ligase family.</text>
</comment>
<accession>Q8NQV2</accession>
<name>DDL_CORGL</name>
<sequence length="360" mass="38560">MSNSNSGKVRVAVVYGGRSSEHSVSCVSAGAIMAHLDPEKYDVIPVGITVDGAWVVGETDPQKLTLIDRTMPEVEHHEEVRPSLDPAHRGEFHFSDGSLYATADVIFPVLHGRFGEDGTVQGLFALSDIPVVGPGVLASAAGMDKEYTKKLMAAEGLPVGREVILRDRTELTEAEKNLLGLPVFVKPARGGSSIGISRVTAWEDFNKAVGLARAHDEKVIVESEIVGSEVECGVLQYPDGRIVASVPALLSGTESGAGGFYDFDTKYLDNVVTAEIPAPLDEKTTELIQSLAVESFQALACEGLARVDFFVTANGPVLNEINTMPGFTPISMYPQMFTASGVAYEELLDVLVQQALHRDN</sequence>